<feature type="chain" id="PRO_0000141852" description="3-isopropylmalate dehydratase small subunit">
    <location>
        <begin position="1"/>
        <end position="201"/>
    </location>
</feature>
<sequence length="201" mass="22885">MPKEFKQHTGIAVPLDASNVDTDAIIPKQFLQKVTRIGFGQHLFHEWRFLDDEGKQPNPDFVLNYPRYQGASILLARENFGCGSSREHAPWALDDYGIRVIIAPSFADIFYGNSLNNQMLPIRLSDEEVEELFQFVNANEGATITVDLETQRVSANNKVYSFEIDPFRRHCLLNGLDNIGLTLQHEAKIAEYESNIPAFLR</sequence>
<keyword id="KW-0028">Amino-acid biosynthesis</keyword>
<keyword id="KW-0100">Branched-chain amino acid biosynthesis</keyword>
<keyword id="KW-0432">Leucine biosynthesis</keyword>
<keyword id="KW-0456">Lyase</keyword>
<keyword id="KW-1185">Reference proteome</keyword>
<proteinExistence type="inferred from homology"/>
<accession>Q9CJN8</accession>
<evidence type="ECO:0000255" key="1">
    <source>
        <dbReference type="HAMAP-Rule" id="MF_01031"/>
    </source>
</evidence>
<name>LEUD_PASMU</name>
<gene>
    <name evidence="1" type="primary">leuD</name>
    <name type="ordered locus">PM1959</name>
</gene>
<comment type="function">
    <text evidence="1">Catalyzes the isomerization between 2-isopropylmalate and 3-isopropylmalate, via the formation of 2-isopropylmaleate.</text>
</comment>
<comment type="catalytic activity">
    <reaction evidence="1">
        <text>(2R,3S)-3-isopropylmalate = (2S)-2-isopropylmalate</text>
        <dbReference type="Rhea" id="RHEA:32287"/>
        <dbReference type="ChEBI" id="CHEBI:1178"/>
        <dbReference type="ChEBI" id="CHEBI:35121"/>
        <dbReference type="EC" id="4.2.1.33"/>
    </reaction>
</comment>
<comment type="pathway">
    <text evidence="1">Amino-acid biosynthesis; L-leucine biosynthesis; L-leucine from 3-methyl-2-oxobutanoate: step 2/4.</text>
</comment>
<comment type="subunit">
    <text evidence="1">Heterodimer of LeuC and LeuD.</text>
</comment>
<comment type="similarity">
    <text evidence="1">Belongs to the LeuD family. LeuD type 1 subfamily.</text>
</comment>
<protein>
    <recommendedName>
        <fullName evidence="1">3-isopropylmalate dehydratase small subunit</fullName>
        <ecNumber evidence="1">4.2.1.33</ecNumber>
    </recommendedName>
    <alternativeName>
        <fullName evidence="1">Alpha-IPM isomerase</fullName>
        <shortName evidence="1">IPMI</shortName>
    </alternativeName>
    <alternativeName>
        <fullName evidence="1">Isopropylmalate isomerase</fullName>
    </alternativeName>
</protein>
<dbReference type="EC" id="4.2.1.33" evidence="1"/>
<dbReference type="EMBL" id="AE004439">
    <property type="protein sequence ID" value="AAK04043.1"/>
    <property type="molecule type" value="Genomic_DNA"/>
</dbReference>
<dbReference type="RefSeq" id="WP_005725049.1">
    <property type="nucleotide sequence ID" value="NC_002663.1"/>
</dbReference>
<dbReference type="SMR" id="Q9CJN8"/>
<dbReference type="STRING" id="272843.PM1959"/>
<dbReference type="EnsemblBacteria" id="AAK04043">
    <property type="protein sequence ID" value="AAK04043"/>
    <property type="gene ID" value="PM1959"/>
</dbReference>
<dbReference type="GeneID" id="77207288"/>
<dbReference type="KEGG" id="pmu:PM1959"/>
<dbReference type="PATRIC" id="fig|272843.6.peg.1983"/>
<dbReference type="HOGENOM" id="CLU_081378_0_3_6"/>
<dbReference type="OrthoDB" id="9777465at2"/>
<dbReference type="UniPathway" id="UPA00048">
    <property type="reaction ID" value="UER00071"/>
</dbReference>
<dbReference type="Proteomes" id="UP000000809">
    <property type="component" value="Chromosome"/>
</dbReference>
<dbReference type="GO" id="GO:0009316">
    <property type="term" value="C:3-isopropylmalate dehydratase complex"/>
    <property type="evidence" value="ECO:0007669"/>
    <property type="project" value="InterPro"/>
</dbReference>
<dbReference type="GO" id="GO:0003861">
    <property type="term" value="F:3-isopropylmalate dehydratase activity"/>
    <property type="evidence" value="ECO:0007669"/>
    <property type="project" value="UniProtKB-UniRule"/>
</dbReference>
<dbReference type="GO" id="GO:0009098">
    <property type="term" value="P:L-leucine biosynthetic process"/>
    <property type="evidence" value="ECO:0007669"/>
    <property type="project" value="UniProtKB-UniRule"/>
</dbReference>
<dbReference type="CDD" id="cd01577">
    <property type="entry name" value="IPMI_Swivel"/>
    <property type="match status" value="1"/>
</dbReference>
<dbReference type="FunFam" id="3.20.19.10:FF:000003">
    <property type="entry name" value="3-isopropylmalate dehydratase small subunit"/>
    <property type="match status" value="1"/>
</dbReference>
<dbReference type="Gene3D" id="3.20.19.10">
    <property type="entry name" value="Aconitase, domain 4"/>
    <property type="match status" value="1"/>
</dbReference>
<dbReference type="HAMAP" id="MF_01031">
    <property type="entry name" value="LeuD_type1"/>
    <property type="match status" value="1"/>
</dbReference>
<dbReference type="InterPro" id="IPR004431">
    <property type="entry name" value="3-IsopropMal_deHydase_ssu"/>
</dbReference>
<dbReference type="InterPro" id="IPR015928">
    <property type="entry name" value="Aconitase/3IPM_dehydase_swvl"/>
</dbReference>
<dbReference type="InterPro" id="IPR000573">
    <property type="entry name" value="AconitaseA/IPMdHydase_ssu_swvl"/>
</dbReference>
<dbReference type="InterPro" id="IPR033940">
    <property type="entry name" value="IPMI_Swivel"/>
</dbReference>
<dbReference type="InterPro" id="IPR050075">
    <property type="entry name" value="LeuD"/>
</dbReference>
<dbReference type="NCBIfam" id="TIGR00171">
    <property type="entry name" value="leuD"/>
    <property type="match status" value="1"/>
</dbReference>
<dbReference type="NCBIfam" id="NF002458">
    <property type="entry name" value="PRK01641.1"/>
    <property type="match status" value="1"/>
</dbReference>
<dbReference type="PANTHER" id="PTHR43345:SF5">
    <property type="entry name" value="3-ISOPROPYLMALATE DEHYDRATASE SMALL SUBUNIT"/>
    <property type="match status" value="1"/>
</dbReference>
<dbReference type="PANTHER" id="PTHR43345">
    <property type="entry name" value="3-ISOPROPYLMALATE DEHYDRATASE SMALL SUBUNIT 2-RELATED-RELATED"/>
    <property type="match status" value="1"/>
</dbReference>
<dbReference type="Pfam" id="PF00694">
    <property type="entry name" value="Aconitase_C"/>
    <property type="match status" value="1"/>
</dbReference>
<dbReference type="SUPFAM" id="SSF52016">
    <property type="entry name" value="LeuD/IlvD-like"/>
    <property type="match status" value="1"/>
</dbReference>
<reference key="1">
    <citation type="journal article" date="2001" name="Proc. Natl. Acad. Sci. U.S.A.">
        <title>Complete genomic sequence of Pasteurella multocida Pm70.</title>
        <authorList>
            <person name="May B.J."/>
            <person name="Zhang Q."/>
            <person name="Li L.L."/>
            <person name="Paustian M.L."/>
            <person name="Whittam T.S."/>
            <person name="Kapur V."/>
        </authorList>
    </citation>
    <scope>NUCLEOTIDE SEQUENCE [LARGE SCALE GENOMIC DNA]</scope>
    <source>
        <strain>Pm70</strain>
    </source>
</reference>
<organism>
    <name type="scientific">Pasteurella multocida (strain Pm70)</name>
    <dbReference type="NCBI Taxonomy" id="272843"/>
    <lineage>
        <taxon>Bacteria</taxon>
        <taxon>Pseudomonadati</taxon>
        <taxon>Pseudomonadota</taxon>
        <taxon>Gammaproteobacteria</taxon>
        <taxon>Pasteurellales</taxon>
        <taxon>Pasteurellaceae</taxon>
        <taxon>Pasteurella</taxon>
    </lineage>
</organism>